<comment type="similarity">
    <text evidence="1">Belongs to the PPR family. PCMP-E subfamily.</text>
</comment>
<comment type="online information" name="Pentatricopeptide repeat proteins">
    <link uri="https://ppr.plantenergy.uwa.edu.au"/>
</comment>
<keyword id="KW-1185">Reference proteome</keyword>
<keyword id="KW-0677">Repeat</keyword>
<feature type="chain" id="PRO_0000363540" description="Putative pentatricopeptide repeat-containing protein At5g37570">
    <location>
        <begin position="1"/>
        <end position="550"/>
    </location>
</feature>
<feature type="repeat" description="PPR 1">
    <location>
        <begin position="73"/>
        <end position="107"/>
    </location>
</feature>
<feature type="repeat" description="PPR 2">
    <location>
        <begin position="109"/>
        <end position="143"/>
    </location>
</feature>
<feature type="repeat" description="PPR 3">
    <location>
        <begin position="144"/>
        <end position="174"/>
    </location>
</feature>
<feature type="repeat" description="PPR 4">
    <location>
        <begin position="175"/>
        <end position="205"/>
    </location>
</feature>
<feature type="repeat" description="PPR 5">
    <location>
        <begin position="206"/>
        <end position="240"/>
    </location>
</feature>
<feature type="repeat" description="PPR 6">
    <location>
        <begin position="241"/>
        <end position="267"/>
    </location>
</feature>
<feature type="repeat" description="PPR 7">
    <location>
        <begin position="268"/>
        <end position="302"/>
    </location>
</feature>
<feature type="repeat" description="PPR 8">
    <location>
        <begin position="303"/>
        <end position="333"/>
    </location>
</feature>
<feature type="repeat" description="PPR 9">
    <location>
        <begin position="339"/>
        <end position="369"/>
    </location>
</feature>
<feature type="repeat" description="PPR 10">
    <location>
        <begin position="370"/>
        <end position="404"/>
    </location>
</feature>
<feature type="repeat" description="PPR 11">
    <location>
        <begin position="405"/>
        <end position="435"/>
    </location>
</feature>
<feature type="repeat" description="PPR 12">
    <location>
        <begin position="441"/>
        <end position="475"/>
    </location>
</feature>
<feature type="region of interest" description="Type E motif">
    <location>
        <begin position="476"/>
        <end position="550"/>
    </location>
</feature>
<organism>
    <name type="scientific">Arabidopsis thaliana</name>
    <name type="common">Mouse-ear cress</name>
    <dbReference type="NCBI Taxonomy" id="3702"/>
    <lineage>
        <taxon>Eukaryota</taxon>
        <taxon>Viridiplantae</taxon>
        <taxon>Streptophyta</taxon>
        <taxon>Embryophyta</taxon>
        <taxon>Tracheophyta</taxon>
        <taxon>Spermatophyta</taxon>
        <taxon>Magnoliopsida</taxon>
        <taxon>eudicotyledons</taxon>
        <taxon>Gunneridae</taxon>
        <taxon>Pentapetalae</taxon>
        <taxon>rosids</taxon>
        <taxon>malvids</taxon>
        <taxon>Brassicales</taxon>
        <taxon>Brassicaceae</taxon>
        <taxon>Camelineae</taxon>
        <taxon>Arabidopsis</taxon>
    </lineage>
</organism>
<name>PP403_ARATH</name>
<proteinExistence type="inferred from homology"/>
<sequence>MIQRLSHPSLLSLETLFKLCKSEIHLNQIHARIIRKGLEQDQNLISIFISSSSSSSSSLSYSSSVFERVPSPGTYLWNHLIKGYSNKFLFFETVSILMRMMRTGLARPDEYTFPLVMKVCSNNGQVRVGSSVHGLVLRIGFDKDVVVGTSFVDFYGKCKDLFSARKVFGEMPERNAVSWTALVVAYVKSGELEEAKSMFDLMPERNLGSWNALVDGLVKSGDLVNAKKLFDEMPKRDIISYTSMIDGYAKGGDMVSARDLFEEARGVDVRAWSALILGYAQNGQPNEAFKVFSEMCAKNVKPDEFIMVGLMSACSQMGCFELCEKVDSYLHQRMNKFSSHYVVPALIDMNAKCGHMDRAAKLFEEMPQRDLVSYCSMMEGMAIHGCGSEAIRLFEKMVDEGIVPDEVAFTVILKVCGQSRLVEEGLRYFELMRKKYSILASPDHYSCIVNLLSRTGKLKEAYELIKSMPFEAHASAWGSLLGGCSLHGNTEIAEVVARHLFELEPQSAGSYVLLSNIYAALDRWTDVAHLRDKMNENGITKICGRSWISR</sequence>
<accession>Q9FHR3</accession>
<evidence type="ECO:0000305" key="1"/>
<dbReference type="EMBL" id="AB018107">
    <property type="protein sequence ID" value="BAB08303.1"/>
    <property type="molecule type" value="Genomic_DNA"/>
</dbReference>
<dbReference type="EMBL" id="CP002688">
    <property type="protein sequence ID" value="AED94207.1"/>
    <property type="molecule type" value="Genomic_DNA"/>
</dbReference>
<dbReference type="EMBL" id="CP002688">
    <property type="protein sequence ID" value="ANM68719.1"/>
    <property type="molecule type" value="Genomic_DNA"/>
</dbReference>
<dbReference type="RefSeq" id="NP_001330445.1">
    <property type="nucleotide sequence ID" value="NM_001344210.1"/>
</dbReference>
<dbReference type="RefSeq" id="NP_198573.1">
    <property type="nucleotide sequence ID" value="NM_123116.2"/>
</dbReference>
<dbReference type="SMR" id="Q9FHR3"/>
<dbReference type="FunCoup" id="Q9FHR3">
    <property type="interactions" value="823"/>
</dbReference>
<dbReference type="PaxDb" id="3702-AT5G37570.1"/>
<dbReference type="ProteomicsDB" id="249284"/>
<dbReference type="EnsemblPlants" id="AT5G37570.1">
    <property type="protein sequence ID" value="AT5G37570.1"/>
    <property type="gene ID" value="AT5G37570"/>
</dbReference>
<dbReference type="EnsemblPlants" id="AT5G37570.2">
    <property type="protein sequence ID" value="AT5G37570.2"/>
    <property type="gene ID" value="AT5G37570"/>
</dbReference>
<dbReference type="GeneID" id="833735"/>
<dbReference type="Gramene" id="AT5G37570.1">
    <property type="protein sequence ID" value="AT5G37570.1"/>
    <property type="gene ID" value="AT5G37570"/>
</dbReference>
<dbReference type="Gramene" id="AT5G37570.2">
    <property type="protein sequence ID" value="AT5G37570.2"/>
    <property type="gene ID" value="AT5G37570"/>
</dbReference>
<dbReference type="KEGG" id="ath:AT5G37570"/>
<dbReference type="Araport" id="AT5G37570"/>
<dbReference type="TAIR" id="AT5G37570"/>
<dbReference type="eggNOG" id="KOG4197">
    <property type="taxonomic scope" value="Eukaryota"/>
</dbReference>
<dbReference type="HOGENOM" id="CLU_002706_0_6_1"/>
<dbReference type="InParanoid" id="Q9FHR3"/>
<dbReference type="OMA" id="WVDSYVS"/>
<dbReference type="PhylomeDB" id="Q9FHR3"/>
<dbReference type="PRO" id="PR:Q9FHR3"/>
<dbReference type="Proteomes" id="UP000006548">
    <property type="component" value="Chromosome 5"/>
</dbReference>
<dbReference type="ExpressionAtlas" id="Q9FHR3">
    <property type="expression patterns" value="baseline and differential"/>
</dbReference>
<dbReference type="GO" id="GO:0003723">
    <property type="term" value="F:RNA binding"/>
    <property type="evidence" value="ECO:0007669"/>
    <property type="project" value="InterPro"/>
</dbReference>
<dbReference type="GO" id="GO:0009451">
    <property type="term" value="P:RNA modification"/>
    <property type="evidence" value="ECO:0007669"/>
    <property type="project" value="InterPro"/>
</dbReference>
<dbReference type="FunFam" id="1.25.40.10:FF:000334">
    <property type="entry name" value="Pentatricopeptide repeat-containing protein"/>
    <property type="match status" value="1"/>
</dbReference>
<dbReference type="FunFam" id="1.25.40.10:FF:001095">
    <property type="entry name" value="Pentatricopeptide repeat-containing protein At2g34400"/>
    <property type="match status" value="1"/>
</dbReference>
<dbReference type="FunFam" id="1.25.40.10:FF:001156">
    <property type="entry name" value="Pentatricopeptide repeat-containing protein At5g61800"/>
    <property type="match status" value="1"/>
</dbReference>
<dbReference type="Gene3D" id="1.25.40.10">
    <property type="entry name" value="Tetratricopeptide repeat domain"/>
    <property type="match status" value="4"/>
</dbReference>
<dbReference type="InterPro" id="IPR046848">
    <property type="entry name" value="E_motif"/>
</dbReference>
<dbReference type="InterPro" id="IPR002885">
    <property type="entry name" value="Pentatricopeptide_rpt"/>
</dbReference>
<dbReference type="InterPro" id="IPR046960">
    <property type="entry name" value="PPR_At4g14850-like_plant"/>
</dbReference>
<dbReference type="InterPro" id="IPR011990">
    <property type="entry name" value="TPR-like_helical_dom_sf"/>
</dbReference>
<dbReference type="NCBIfam" id="TIGR00756">
    <property type="entry name" value="PPR"/>
    <property type="match status" value="6"/>
</dbReference>
<dbReference type="PANTHER" id="PTHR47926">
    <property type="entry name" value="PENTATRICOPEPTIDE REPEAT-CONTAINING PROTEIN"/>
    <property type="match status" value="1"/>
</dbReference>
<dbReference type="PANTHER" id="PTHR47926:SF467">
    <property type="entry name" value="REPEAT-CONTAINING PROTEIN, PUTATIVE-RELATED"/>
    <property type="match status" value="1"/>
</dbReference>
<dbReference type="Pfam" id="PF20431">
    <property type="entry name" value="E_motif"/>
    <property type="match status" value="1"/>
</dbReference>
<dbReference type="Pfam" id="PF01535">
    <property type="entry name" value="PPR"/>
    <property type="match status" value="6"/>
</dbReference>
<dbReference type="Pfam" id="PF13041">
    <property type="entry name" value="PPR_2"/>
    <property type="match status" value="2"/>
</dbReference>
<dbReference type="PROSITE" id="PS51375">
    <property type="entry name" value="PPR"/>
    <property type="match status" value="12"/>
</dbReference>
<reference key="1">
    <citation type="journal article" date="1999" name="DNA Res.">
        <title>Structural analysis of Arabidopsis thaliana chromosome 5. IX. Sequence features of the regions of 1,011,550 bp covered by seventeen P1 and TAC clones.</title>
        <authorList>
            <person name="Kaneko T."/>
            <person name="Katoh T."/>
            <person name="Sato S."/>
            <person name="Nakamura Y."/>
            <person name="Asamizu E."/>
            <person name="Kotani H."/>
            <person name="Miyajima N."/>
            <person name="Tabata S."/>
        </authorList>
    </citation>
    <scope>NUCLEOTIDE SEQUENCE [LARGE SCALE GENOMIC DNA]</scope>
    <source>
        <strain>cv. Columbia</strain>
    </source>
</reference>
<reference key="2">
    <citation type="journal article" date="2017" name="Plant J.">
        <title>Araport11: a complete reannotation of the Arabidopsis thaliana reference genome.</title>
        <authorList>
            <person name="Cheng C.Y."/>
            <person name="Krishnakumar V."/>
            <person name="Chan A.P."/>
            <person name="Thibaud-Nissen F."/>
            <person name="Schobel S."/>
            <person name="Town C.D."/>
        </authorList>
    </citation>
    <scope>GENOME REANNOTATION</scope>
    <source>
        <strain>cv. Columbia</strain>
    </source>
</reference>
<reference key="3">
    <citation type="journal article" date="2000" name="Plant Mol. Biol.">
        <title>In Arabidopsis thaliana, 1% of the genome codes for a novel protein family unique to plants.</title>
        <authorList>
            <person name="Aubourg S."/>
            <person name="Boudet N."/>
            <person name="Kreis M."/>
            <person name="Lecharny A."/>
        </authorList>
    </citation>
    <scope>GENE FAMILY</scope>
</reference>
<reference key="4">
    <citation type="journal article" date="2004" name="Plant Cell">
        <title>Genome-wide analysis of Arabidopsis pentatricopeptide repeat proteins reveals their essential role in organelle biogenesis.</title>
        <authorList>
            <person name="Lurin C."/>
            <person name="Andres C."/>
            <person name="Aubourg S."/>
            <person name="Bellaoui M."/>
            <person name="Bitton F."/>
            <person name="Bruyere C."/>
            <person name="Caboche M."/>
            <person name="Debast C."/>
            <person name="Gualberto J."/>
            <person name="Hoffmann B."/>
            <person name="Lecharny A."/>
            <person name="Le Ret M."/>
            <person name="Martin-Magniette M.-L."/>
            <person name="Mireau H."/>
            <person name="Peeters N."/>
            <person name="Renou J.-P."/>
            <person name="Szurek B."/>
            <person name="Taconnat L."/>
            <person name="Small I."/>
        </authorList>
    </citation>
    <scope>GENE FAMILY</scope>
</reference>
<protein>
    <recommendedName>
        <fullName>Putative pentatricopeptide repeat-containing protein At5g37570</fullName>
    </recommendedName>
</protein>
<gene>
    <name type="primary">PCMP-E37</name>
    <name type="ordered locus">At5g37570</name>
    <name type="ORF">K12B20.3</name>
</gene>